<proteinExistence type="evidence at protein level"/>
<dbReference type="EC" id="2.7.11.11"/>
<dbReference type="EMBL" id="M17074">
    <property type="protein sequence ID" value="AAA35166.1"/>
    <property type="molecule type" value="Genomic_DNA"/>
</dbReference>
<dbReference type="EMBL" id="Z26878">
    <property type="protein sequence ID" value="CAA81521.1"/>
    <property type="molecule type" value="Genomic_DNA"/>
</dbReference>
<dbReference type="EMBL" id="Z28166">
    <property type="protein sequence ID" value="CAA82008.1"/>
    <property type="molecule type" value="Genomic_DNA"/>
</dbReference>
<dbReference type="EMBL" id="M81697">
    <property type="protein sequence ID" value="AAA34791.1"/>
    <property type="molecule type" value="Genomic_DNA"/>
</dbReference>
<dbReference type="EMBL" id="BK006944">
    <property type="protein sequence ID" value="DAA08999.1"/>
    <property type="molecule type" value="Genomic_DNA"/>
</dbReference>
<dbReference type="PIR" id="S37996">
    <property type="entry name" value="OKBYC3"/>
</dbReference>
<dbReference type="RefSeq" id="NP_012755.1">
    <property type="nucleotide sequence ID" value="NM_001179732.1"/>
</dbReference>
<dbReference type="SMR" id="P05986"/>
<dbReference type="BioGRID" id="33971">
    <property type="interactions" value="328"/>
</dbReference>
<dbReference type="ComplexPortal" id="CPX-571">
    <property type="entry name" value="cAMP-dependent protein kinase complex variant 3"/>
</dbReference>
<dbReference type="ComplexPortal" id="CPX-573">
    <property type="entry name" value="cAMP-dependent protein kinase complex variant 5"/>
</dbReference>
<dbReference type="ComplexPortal" id="CPX-574">
    <property type="entry name" value="cAMP-dependent protein kinase complex variant 6"/>
</dbReference>
<dbReference type="DIP" id="DIP-550N"/>
<dbReference type="FunCoup" id="P05986">
    <property type="interactions" value="1056"/>
</dbReference>
<dbReference type="IntAct" id="P05986">
    <property type="interactions" value="28"/>
</dbReference>
<dbReference type="MINT" id="P05986"/>
<dbReference type="STRING" id="4932.YKL166C"/>
<dbReference type="iPTMnet" id="P05986"/>
<dbReference type="PaxDb" id="4932-YKL166C"/>
<dbReference type="PeptideAtlas" id="P05986"/>
<dbReference type="EnsemblFungi" id="YKL166C_mRNA">
    <property type="protein sequence ID" value="YKL166C"/>
    <property type="gene ID" value="YKL166C"/>
</dbReference>
<dbReference type="GeneID" id="853688"/>
<dbReference type="KEGG" id="sce:YKL166C"/>
<dbReference type="AGR" id="SGD:S000001649"/>
<dbReference type="SGD" id="S000001649">
    <property type="gene designation" value="TPK3"/>
</dbReference>
<dbReference type="VEuPathDB" id="FungiDB:YKL166C"/>
<dbReference type="eggNOG" id="KOG0616">
    <property type="taxonomic scope" value="Eukaryota"/>
</dbReference>
<dbReference type="GeneTree" id="ENSGT00940000176357"/>
<dbReference type="HOGENOM" id="CLU_000288_63_5_1"/>
<dbReference type="InParanoid" id="P05986"/>
<dbReference type="OMA" id="KHTVVKL"/>
<dbReference type="OrthoDB" id="63267at2759"/>
<dbReference type="BioCyc" id="YEAST:G3O-31934-MONOMER"/>
<dbReference type="BRENDA" id="2.7.11.11">
    <property type="organism ID" value="984"/>
</dbReference>
<dbReference type="Reactome" id="R-SCE-163615">
    <property type="pathway name" value="PKA activation"/>
</dbReference>
<dbReference type="Reactome" id="R-SCE-164378">
    <property type="pathway name" value="PKA activation in glucagon signalling"/>
</dbReference>
<dbReference type="Reactome" id="R-SCE-180024">
    <property type="pathway name" value="DARPP-32 events"/>
</dbReference>
<dbReference type="Reactome" id="R-SCE-432040">
    <property type="pathway name" value="Vasopressin regulates renal water homeostasis via Aquaporins"/>
</dbReference>
<dbReference type="Reactome" id="R-SCE-442720">
    <property type="pathway name" value="CREB1 phosphorylation through the activation of Adenylate Cyclase"/>
</dbReference>
<dbReference type="Reactome" id="R-SCE-5610787">
    <property type="pathway name" value="Hedgehog 'off' state"/>
</dbReference>
<dbReference type="Reactome" id="R-SCE-9634597">
    <property type="pathway name" value="GPER1 signaling"/>
</dbReference>
<dbReference type="Reactome" id="R-SCE-983231">
    <property type="pathway name" value="Factors involved in megakaryocyte development and platelet production"/>
</dbReference>
<dbReference type="Reactome" id="R-SCE-9856530">
    <property type="pathway name" value="High laminar flow shear stress activates signaling by PIEZO1 and PECAM1:CDH5:KDR in endothelial cells"/>
</dbReference>
<dbReference type="BioGRID-ORCS" id="853688">
    <property type="hits" value="0 hits in 13 CRISPR screens"/>
</dbReference>
<dbReference type="PRO" id="PR:P05986"/>
<dbReference type="Proteomes" id="UP000002311">
    <property type="component" value="Chromosome XI"/>
</dbReference>
<dbReference type="RNAct" id="P05986">
    <property type="molecule type" value="protein"/>
</dbReference>
<dbReference type="GO" id="GO:0005952">
    <property type="term" value="C:cAMP-dependent protein kinase complex"/>
    <property type="evidence" value="ECO:0000316"/>
    <property type="project" value="SGD"/>
</dbReference>
<dbReference type="GO" id="GO:0005737">
    <property type="term" value="C:cytoplasm"/>
    <property type="evidence" value="ECO:0000314"/>
    <property type="project" value="SGD"/>
</dbReference>
<dbReference type="GO" id="GO:0010494">
    <property type="term" value="C:cytoplasmic stress granule"/>
    <property type="evidence" value="ECO:0000314"/>
    <property type="project" value="SGD"/>
</dbReference>
<dbReference type="GO" id="GO:0005829">
    <property type="term" value="C:cytosol"/>
    <property type="evidence" value="ECO:0000318"/>
    <property type="project" value="GO_Central"/>
</dbReference>
<dbReference type="GO" id="GO:0005634">
    <property type="term" value="C:nucleus"/>
    <property type="evidence" value="ECO:0000314"/>
    <property type="project" value="SGD"/>
</dbReference>
<dbReference type="GO" id="GO:0000932">
    <property type="term" value="C:P-body"/>
    <property type="evidence" value="ECO:0000314"/>
    <property type="project" value="SGD"/>
</dbReference>
<dbReference type="GO" id="GO:0005524">
    <property type="term" value="F:ATP binding"/>
    <property type="evidence" value="ECO:0007669"/>
    <property type="project" value="UniProtKB-KW"/>
</dbReference>
<dbReference type="GO" id="GO:0004691">
    <property type="term" value="F:cAMP-dependent protein kinase activity"/>
    <property type="evidence" value="ECO:0000314"/>
    <property type="project" value="SGD"/>
</dbReference>
<dbReference type="GO" id="GO:0004672">
    <property type="term" value="F:protein kinase activity"/>
    <property type="evidence" value="ECO:0007005"/>
    <property type="project" value="SGD"/>
</dbReference>
<dbReference type="GO" id="GO:0106310">
    <property type="term" value="F:protein serine kinase activity"/>
    <property type="evidence" value="ECO:0007669"/>
    <property type="project" value="RHEA"/>
</dbReference>
<dbReference type="GO" id="GO:0070314">
    <property type="term" value="P:G1 to G0 transition"/>
    <property type="evidence" value="ECO:0000315"/>
    <property type="project" value="SGD"/>
</dbReference>
<dbReference type="GO" id="GO:0007005">
    <property type="term" value="P:mitochondrion organization"/>
    <property type="evidence" value="ECO:0000315"/>
    <property type="project" value="SGD"/>
</dbReference>
<dbReference type="GO" id="GO:0010607">
    <property type="term" value="P:negative regulation of cytoplasmic mRNA processing body assembly"/>
    <property type="evidence" value="ECO:0000316"/>
    <property type="project" value="SGD"/>
</dbReference>
<dbReference type="GO" id="GO:2000766">
    <property type="term" value="P:negative regulation of cytoplasmic translation"/>
    <property type="evidence" value="ECO:0000315"/>
    <property type="project" value="SGD"/>
</dbReference>
<dbReference type="GO" id="GO:0010737">
    <property type="term" value="P:protein kinase A signaling"/>
    <property type="evidence" value="ECO:0000316"/>
    <property type="project" value="SGD"/>
</dbReference>
<dbReference type="GO" id="GO:0007265">
    <property type="term" value="P:Ras protein signal transduction"/>
    <property type="evidence" value="ECO:0000316"/>
    <property type="project" value="SGD"/>
</dbReference>
<dbReference type="GO" id="GO:0007165">
    <property type="term" value="P:signal transduction"/>
    <property type="evidence" value="ECO:0000318"/>
    <property type="project" value="GO_Central"/>
</dbReference>
<dbReference type="CDD" id="cd05580">
    <property type="entry name" value="STKc_PKA_like"/>
    <property type="match status" value="1"/>
</dbReference>
<dbReference type="FunFam" id="3.30.200.20:FF:000005">
    <property type="entry name" value="cAMP-dependent protein kinase catalytic subunit"/>
    <property type="match status" value="1"/>
</dbReference>
<dbReference type="FunFam" id="1.10.510.10:FF:000005">
    <property type="entry name" value="cAMP-dependent protein kinase catalytic subunit alpha"/>
    <property type="match status" value="1"/>
</dbReference>
<dbReference type="Gene3D" id="3.30.200.20">
    <property type="entry name" value="Phosphorylase Kinase, domain 1"/>
    <property type="match status" value="1"/>
</dbReference>
<dbReference type="Gene3D" id="1.10.510.10">
    <property type="entry name" value="Transferase(Phosphotransferase) domain 1"/>
    <property type="match status" value="1"/>
</dbReference>
<dbReference type="InterPro" id="IPR000961">
    <property type="entry name" value="AGC-kinase_C"/>
</dbReference>
<dbReference type="InterPro" id="IPR011009">
    <property type="entry name" value="Kinase-like_dom_sf"/>
</dbReference>
<dbReference type="InterPro" id="IPR000719">
    <property type="entry name" value="Prot_kinase_dom"/>
</dbReference>
<dbReference type="InterPro" id="IPR017441">
    <property type="entry name" value="Protein_kinase_ATP_BS"/>
</dbReference>
<dbReference type="InterPro" id="IPR008271">
    <property type="entry name" value="Ser/Thr_kinase_AS"/>
</dbReference>
<dbReference type="PANTHER" id="PTHR24353:SF73">
    <property type="entry name" value="CAMP-DEPENDENT PROTEIN KINASE TYPE 1-RELATED"/>
    <property type="match status" value="1"/>
</dbReference>
<dbReference type="PANTHER" id="PTHR24353">
    <property type="entry name" value="CYCLIC NUCLEOTIDE-DEPENDENT PROTEIN KINASE"/>
    <property type="match status" value="1"/>
</dbReference>
<dbReference type="Pfam" id="PF00069">
    <property type="entry name" value="Pkinase"/>
    <property type="match status" value="1"/>
</dbReference>
<dbReference type="SMART" id="SM00220">
    <property type="entry name" value="S_TKc"/>
    <property type="match status" value="1"/>
</dbReference>
<dbReference type="SUPFAM" id="SSF56112">
    <property type="entry name" value="Protein kinase-like (PK-like)"/>
    <property type="match status" value="1"/>
</dbReference>
<dbReference type="PROSITE" id="PS51285">
    <property type="entry name" value="AGC_KINASE_CTER"/>
    <property type="match status" value="1"/>
</dbReference>
<dbReference type="PROSITE" id="PS00107">
    <property type="entry name" value="PROTEIN_KINASE_ATP"/>
    <property type="match status" value="1"/>
</dbReference>
<dbReference type="PROSITE" id="PS50011">
    <property type="entry name" value="PROTEIN_KINASE_DOM"/>
    <property type="match status" value="1"/>
</dbReference>
<dbReference type="PROSITE" id="PS00108">
    <property type="entry name" value="PROTEIN_KINASE_ST"/>
    <property type="match status" value="1"/>
</dbReference>
<accession>P05986</accession>
<accession>D6VX33</accession>
<comment type="catalytic activity">
    <reaction>
        <text>L-seryl-[protein] + ATP = O-phospho-L-seryl-[protein] + ADP + H(+)</text>
        <dbReference type="Rhea" id="RHEA:17989"/>
        <dbReference type="Rhea" id="RHEA-COMP:9863"/>
        <dbReference type="Rhea" id="RHEA-COMP:11604"/>
        <dbReference type="ChEBI" id="CHEBI:15378"/>
        <dbReference type="ChEBI" id="CHEBI:29999"/>
        <dbReference type="ChEBI" id="CHEBI:30616"/>
        <dbReference type="ChEBI" id="CHEBI:83421"/>
        <dbReference type="ChEBI" id="CHEBI:456216"/>
        <dbReference type="EC" id="2.7.11.11"/>
    </reaction>
</comment>
<comment type="catalytic activity">
    <reaction>
        <text>L-threonyl-[protein] + ATP = O-phospho-L-threonyl-[protein] + ADP + H(+)</text>
        <dbReference type="Rhea" id="RHEA:46608"/>
        <dbReference type="Rhea" id="RHEA-COMP:11060"/>
        <dbReference type="Rhea" id="RHEA-COMP:11605"/>
        <dbReference type="ChEBI" id="CHEBI:15378"/>
        <dbReference type="ChEBI" id="CHEBI:30013"/>
        <dbReference type="ChEBI" id="CHEBI:30616"/>
        <dbReference type="ChEBI" id="CHEBI:61977"/>
        <dbReference type="ChEBI" id="CHEBI:456216"/>
        <dbReference type="EC" id="2.7.11.11"/>
    </reaction>
</comment>
<comment type="activity regulation">
    <text>Activated by cAMP.</text>
</comment>
<comment type="interaction">
    <interactant intactId="EBI-9470">
        <id>P05986</id>
    </interactant>
    <interactant intactId="EBI-9475">
        <id>P07278</id>
        <label>BCY1</label>
    </interactant>
    <organismsDiffer>false</organismsDiffer>
    <experiments>5</experiments>
</comment>
<comment type="interaction">
    <interactant intactId="EBI-9470">
        <id>P05986</id>
    </interactant>
    <interactant intactId="EBI-9465">
        <id>P06245</id>
        <label>TPK2</label>
    </interactant>
    <organismsDiffer>false</organismsDiffer>
    <experiments>7</experiments>
</comment>
<comment type="miscellaneous">
    <text evidence="4">Present with 1590 molecules/cell in log phase SD medium.</text>
</comment>
<comment type="similarity">
    <text evidence="5">Belongs to the protein kinase superfamily. AGC Ser/Thr protein kinase family. cAMP subfamily.</text>
</comment>
<protein>
    <recommendedName>
        <fullName>cAMP-dependent protein kinase type 3</fullName>
        <shortName>PKA 3</shortName>
        <ecNumber>2.7.11.11</ecNumber>
    </recommendedName>
</protein>
<gene>
    <name type="primary">TPK3</name>
    <name type="synonym">PKA3</name>
    <name type="ordered locus">YKL166C</name>
    <name type="ORF">YKL630</name>
</gene>
<evidence type="ECO:0000255" key="1">
    <source>
        <dbReference type="PROSITE-ProRule" id="PRU00159"/>
    </source>
</evidence>
<evidence type="ECO:0000255" key="2">
    <source>
        <dbReference type="PROSITE-ProRule" id="PRU00618"/>
    </source>
</evidence>
<evidence type="ECO:0000255" key="3">
    <source>
        <dbReference type="PROSITE-ProRule" id="PRU10027"/>
    </source>
</evidence>
<evidence type="ECO:0000269" key="4">
    <source>
    </source>
</evidence>
<evidence type="ECO:0000305" key="5"/>
<evidence type="ECO:0007744" key="6">
    <source>
    </source>
</evidence>
<evidence type="ECO:0007744" key="7">
    <source>
    </source>
</evidence>
<keyword id="KW-0067">ATP-binding</keyword>
<keyword id="KW-0114">cAMP</keyword>
<keyword id="KW-0418">Kinase</keyword>
<keyword id="KW-0547">Nucleotide-binding</keyword>
<keyword id="KW-0597">Phosphoprotein</keyword>
<keyword id="KW-1185">Reference proteome</keyword>
<keyword id="KW-0723">Serine/threonine-protein kinase</keyword>
<keyword id="KW-0808">Transferase</keyword>
<feature type="chain" id="PRO_0000086071" description="cAMP-dependent protein kinase type 3">
    <location>
        <begin position="1"/>
        <end position="398"/>
    </location>
</feature>
<feature type="domain" description="Protein kinase" evidence="1">
    <location>
        <begin position="88"/>
        <end position="342"/>
    </location>
</feature>
<feature type="domain" description="AGC-kinase C-terminal" evidence="2">
    <location>
        <begin position="343"/>
        <end position="398"/>
    </location>
</feature>
<feature type="active site" description="Proton acceptor" evidence="1 3">
    <location>
        <position position="211"/>
    </location>
</feature>
<feature type="binding site" evidence="1">
    <location>
        <begin position="94"/>
        <end position="102"/>
    </location>
    <ligand>
        <name>ATP</name>
        <dbReference type="ChEBI" id="CHEBI:30616"/>
    </ligand>
</feature>
<feature type="binding site" evidence="1">
    <location>
        <position position="117"/>
    </location>
    <ligand>
        <name>ATP</name>
        <dbReference type="ChEBI" id="CHEBI:30616"/>
    </ligand>
</feature>
<feature type="modified residue" description="Phosphoserine" evidence="6">
    <location>
        <position position="15"/>
    </location>
</feature>
<feature type="modified residue" description="Phosphoserine" evidence="7">
    <location>
        <position position="55"/>
    </location>
</feature>
<feature type="sequence conflict" description="In Ref. 1; AAA35166." evidence="5" ref="1">
    <original>D</original>
    <variation>E</variation>
    <location>
        <position position="4"/>
    </location>
</feature>
<feature type="sequence conflict" description="In Ref. 1; AAA35166." evidence="5" ref="1">
    <original>I</original>
    <variation>T</variation>
    <location>
        <position position="208"/>
    </location>
</feature>
<organism>
    <name type="scientific">Saccharomyces cerevisiae (strain ATCC 204508 / S288c)</name>
    <name type="common">Baker's yeast</name>
    <dbReference type="NCBI Taxonomy" id="559292"/>
    <lineage>
        <taxon>Eukaryota</taxon>
        <taxon>Fungi</taxon>
        <taxon>Dikarya</taxon>
        <taxon>Ascomycota</taxon>
        <taxon>Saccharomycotina</taxon>
        <taxon>Saccharomycetes</taxon>
        <taxon>Saccharomycetales</taxon>
        <taxon>Saccharomycetaceae</taxon>
        <taxon>Saccharomyces</taxon>
    </lineage>
</organism>
<sequence length="398" mass="45977">MYVDPMNNNEIRKLSITAKTETTPDNVGQDIPVNAHSVHEECSSNTPVEINGRNSGKLKEEASAGICLVKKPMLQYRDTSGKYSLSDFQILRTLGTGSFGRVHLIRSNHNGRFYALKTLKKHTIVKLKQVEHTNDERRMLSIVSHPFIIRMWGTFQDSQQVFMVMDYIEGGELFSLLRKSQRFPNPVAKFYAAEVCLALEYLHSKDIIYRDLKPENILLDKNGHIKITDFGFAKYVPDVTYTLCGTPDYIAPEVVSTKPYNKSVDWWSFGVLIYEMLAGYTPFYNSNTMKTYENILNAELKFPPFFHPDAQDLLKKLITRDLSERLGNLQNGSEDVKNHPWFNEVIWEKLLARYIETPYEPPIQQGQGDTSQFDRYPEEEFNYGIQGEDPYMDLMKEF</sequence>
<reference key="1">
    <citation type="journal article" date="1987" name="Cell">
        <title>Three different genes in S. cerevisiae encode the catalytic subunits of the cAMP-dependent protein kinase.</title>
        <authorList>
            <person name="Toda T."/>
            <person name="Cameron S."/>
            <person name="Sass P."/>
            <person name="Zoller M."/>
            <person name="Wigler M."/>
        </authorList>
    </citation>
    <scope>NUCLEOTIDE SEQUENCE [GENOMIC DNA]</scope>
</reference>
<reference key="2">
    <citation type="journal article" date="1994" name="Yeast">
        <title>Sequencing and analysis of a 20.5 kb DNA segment located on the left arm of yeast chromosome XI.</title>
        <authorList>
            <person name="Vandenbol M."/>
            <person name="Bolle P.-A."/>
            <person name="Dion C."/>
            <person name="Portetelle D."/>
            <person name="Hilger F."/>
        </authorList>
    </citation>
    <scope>NUCLEOTIDE SEQUENCE [GENOMIC DNA]</scope>
    <source>
        <strain>ATCC 204508 / S288c</strain>
    </source>
</reference>
<reference key="3">
    <citation type="journal article" date="1994" name="Nature">
        <title>Complete DNA sequence of yeast chromosome XI.</title>
        <authorList>
            <person name="Dujon B."/>
            <person name="Alexandraki D."/>
            <person name="Andre B."/>
            <person name="Ansorge W."/>
            <person name="Baladron V."/>
            <person name="Ballesta J.P.G."/>
            <person name="Banrevi A."/>
            <person name="Bolle P.-A."/>
            <person name="Bolotin-Fukuhara M."/>
            <person name="Bossier P."/>
            <person name="Bou G."/>
            <person name="Boyer J."/>
            <person name="Buitrago M.J."/>
            <person name="Cheret G."/>
            <person name="Colleaux L."/>
            <person name="Daignan-Fornier B."/>
            <person name="del Rey F."/>
            <person name="Dion C."/>
            <person name="Domdey H."/>
            <person name="Duesterhoeft A."/>
            <person name="Duesterhus S."/>
            <person name="Entian K.-D."/>
            <person name="Erfle H."/>
            <person name="Esteban P.F."/>
            <person name="Feldmann H."/>
            <person name="Fernandes L."/>
            <person name="Fobo G.M."/>
            <person name="Fritz C."/>
            <person name="Fukuhara H."/>
            <person name="Gabel C."/>
            <person name="Gaillon L."/>
            <person name="Garcia-Cantalejo J.M."/>
            <person name="Garcia-Ramirez J.J."/>
            <person name="Gent M.E."/>
            <person name="Ghazvini M."/>
            <person name="Goffeau A."/>
            <person name="Gonzalez A."/>
            <person name="Grothues D."/>
            <person name="Guerreiro P."/>
            <person name="Hegemann J.H."/>
            <person name="Hewitt N."/>
            <person name="Hilger F."/>
            <person name="Hollenberg C.P."/>
            <person name="Horaitis O."/>
            <person name="Indge K.J."/>
            <person name="Jacquier A."/>
            <person name="James C.M."/>
            <person name="Jauniaux J.-C."/>
            <person name="Jimenez A."/>
            <person name="Keuchel H."/>
            <person name="Kirchrath L."/>
            <person name="Kleine K."/>
            <person name="Koetter P."/>
            <person name="Legrain P."/>
            <person name="Liebl S."/>
            <person name="Louis E.J."/>
            <person name="Maia e Silva A."/>
            <person name="Marck C."/>
            <person name="Monnier A.-L."/>
            <person name="Moestl D."/>
            <person name="Mueller S."/>
            <person name="Obermaier B."/>
            <person name="Oliver S.G."/>
            <person name="Pallier C."/>
            <person name="Pascolo S."/>
            <person name="Pfeiffer F."/>
            <person name="Philippsen P."/>
            <person name="Planta R.J."/>
            <person name="Pohl F.M."/>
            <person name="Pohl T.M."/>
            <person name="Poehlmann R."/>
            <person name="Portetelle D."/>
            <person name="Purnelle B."/>
            <person name="Puzos V."/>
            <person name="Ramezani Rad M."/>
            <person name="Rasmussen S.W."/>
            <person name="Remacha M.A."/>
            <person name="Revuelta J.L."/>
            <person name="Richard G.-F."/>
            <person name="Rieger M."/>
            <person name="Rodrigues-Pousada C."/>
            <person name="Rose M."/>
            <person name="Rupp T."/>
            <person name="Santos M.A."/>
            <person name="Schwager C."/>
            <person name="Sensen C."/>
            <person name="Skala J."/>
            <person name="Soares H."/>
            <person name="Sor F."/>
            <person name="Stegemann J."/>
            <person name="Tettelin H."/>
            <person name="Thierry A."/>
            <person name="Tzermia M."/>
            <person name="Urrestarazu L.A."/>
            <person name="van Dyck L."/>
            <person name="van Vliet-Reedijk J.C."/>
            <person name="Valens M."/>
            <person name="Vandenbol M."/>
            <person name="Vilela C."/>
            <person name="Vissers S."/>
            <person name="von Wettstein D."/>
            <person name="Voss H."/>
            <person name="Wiemann S."/>
            <person name="Xu G."/>
            <person name="Zimmermann J."/>
            <person name="Haasemann M."/>
            <person name="Becker I."/>
            <person name="Mewes H.-W."/>
        </authorList>
    </citation>
    <scope>NUCLEOTIDE SEQUENCE [LARGE SCALE GENOMIC DNA]</scope>
    <source>
        <strain>ATCC 204508 / S288c</strain>
    </source>
</reference>
<reference key="4">
    <citation type="journal article" date="2014" name="G3 (Bethesda)">
        <title>The reference genome sequence of Saccharomyces cerevisiae: Then and now.</title>
        <authorList>
            <person name="Engel S.R."/>
            <person name="Dietrich F.S."/>
            <person name="Fisk D.G."/>
            <person name="Binkley G."/>
            <person name="Balakrishnan R."/>
            <person name="Costanzo M.C."/>
            <person name="Dwight S.S."/>
            <person name="Hitz B.C."/>
            <person name="Karra K."/>
            <person name="Nash R.S."/>
            <person name="Weng S."/>
            <person name="Wong E.D."/>
            <person name="Lloyd P."/>
            <person name="Skrzypek M.S."/>
            <person name="Miyasato S.R."/>
            <person name="Simison M."/>
            <person name="Cherry J.M."/>
        </authorList>
    </citation>
    <scope>GENOME REANNOTATION</scope>
    <source>
        <strain>ATCC 204508 / S288c</strain>
    </source>
</reference>
<reference key="5">
    <citation type="journal article" date="1992" name="J. Biol. Chem.">
        <title>Structure and function of MRP20 and MRP49, the nuclear genes for two proteins of the 54 S subunit of the yeast mitochondrial ribosome.</title>
        <authorList>
            <person name="Fearon K."/>
            <person name="Mason T.L."/>
        </authorList>
    </citation>
    <scope>NUCLEOTIDE SEQUENCE [GENOMIC DNA] OF 344-398</scope>
</reference>
<reference key="6">
    <citation type="journal article" date="2003" name="Nature">
        <title>Global analysis of protein expression in yeast.</title>
        <authorList>
            <person name="Ghaemmaghami S."/>
            <person name="Huh W.-K."/>
            <person name="Bower K."/>
            <person name="Howson R.W."/>
            <person name="Belle A."/>
            <person name="Dephoure N."/>
            <person name="O'Shea E.K."/>
            <person name="Weissman J.S."/>
        </authorList>
    </citation>
    <scope>LEVEL OF PROTEIN EXPRESSION [LARGE SCALE ANALYSIS]</scope>
</reference>
<reference key="7">
    <citation type="journal article" date="2007" name="Proc. Natl. Acad. Sci. U.S.A.">
        <title>Analysis of phosphorylation sites on proteins from Saccharomyces cerevisiae by electron transfer dissociation (ETD) mass spectrometry.</title>
        <authorList>
            <person name="Chi A."/>
            <person name="Huttenhower C."/>
            <person name="Geer L.Y."/>
            <person name="Coon J.J."/>
            <person name="Syka J.E.P."/>
            <person name="Bai D.L."/>
            <person name="Shabanowitz J."/>
            <person name="Burke D.J."/>
            <person name="Troyanskaya O.G."/>
            <person name="Hunt D.F."/>
        </authorList>
    </citation>
    <scope>PHOSPHORYLATION [LARGE SCALE ANALYSIS] AT SER-15</scope>
    <scope>IDENTIFICATION BY MASS SPECTROMETRY [LARGE SCALE ANALYSIS]</scope>
</reference>
<reference key="8">
    <citation type="journal article" date="2008" name="Mol. Cell. Proteomics">
        <title>A multidimensional chromatography technology for in-depth phosphoproteome analysis.</title>
        <authorList>
            <person name="Albuquerque C.P."/>
            <person name="Smolka M.B."/>
            <person name="Payne S.H."/>
            <person name="Bafna V."/>
            <person name="Eng J."/>
            <person name="Zhou H."/>
        </authorList>
    </citation>
    <scope>IDENTIFICATION BY MASS SPECTROMETRY [LARGE SCALE ANALYSIS]</scope>
</reference>
<reference key="9">
    <citation type="journal article" date="2009" name="Science">
        <title>Global analysis of Cdk1 substrate phosphorylation sites provides insights into evolution.</title>
        <authorList>
            <person name="Holt L.J."/>
            <person name="Tuch B.B."/>
            <person name="Villen J."/>
            <person name="Johnson A.D."/>
            <person name="Gygi S.P."/>
            <person name="Morgan D.O."/>
        </authorList>
    </citation>
    <scope>PHOSPHORYLATION [LARGE SCALE ANALYSIS] AT SER-55</scope>
    <scope>IDENTIFICATION BY MASS SPECTROMETRY [LARGE SCALE ANALYSIS]</scope>
</reference>
<name>KAPC_YEAST</name>